<evidence type="ECO:0000250" key="1"/>
<evidence type="ECO:0000305" key="2"/>
<comment type="function">
    <text>Involved in degradation of the herbicide 2,4-dichlorophenoxyacetic acid (2,4-D). Is also able to degrade 2-methyl-4-chlorophenoxyacetic acid and 3-chlorobenzoic acid.</text>
</comment>
<comment type="catalytic activity">
    <reaction>
        <text>(2,4-dichlorophenoxy)acetate + 2-oxoglutarate + O2 = 2,4-dichlorophenol + glyoxylate + succinate + CO2</text>
        <dbReference type="Rhea" id="RHEA:48984"/>
        <dbReference type="ChEBI" id="CHEBI:15379"/>
        <dbReference type="ChEBI" id="CHEBI:16526"/>
        <dbReference type="ChEBI" id="CHEBI:16738"/>
        <dbReference type="ChEBI" id="CHEBI:16810"/>
        <dbReference type="ChEBI" id="CHEBI:19351"/>
        <dbReference type="ChEBI" id="CHEBI:30031"/>
        <dbReference type="ChEBI" id="CHEBI:36655"/>
    </reaction>
</comment>
<comment type="cofactor">
    <cofactor evidence="1">
        <name>Fe(2+)</name>
        <dbReference type="ChEBI" id="CHEBI:29033"/>
    </cofactor>
    <text evidence="1">Binds 1 Fe(2+) ion per subunit.</text>
</comment>
<comment type="activity regulation">
    <text evidence="2">Activated by ascorbate.</text>
</comment>
<comment type="pathway">
    <text>Xenobiotic degradation; (2,4-dichlorophenoxy)acetate degradation.</text>
</comment>
<comment type="similarity">
    <text evidence="2">Belongs to the TfdA dioxygenase family.</text>
</comment>
<keyword id="KW-0058">Aromatic hydrocarbons catabolism</keyword>
<keyword id="KW-0223">Dioxygenase</keyword>
<keyword id="KW-0408">Iron</keyword>
<keyword id="KW-0479">Metal-binding</keyword>
<keyword id="KW-0560">Oxidoreductase</keyword>
<keyword id="KW-0847">Vitamin C</keyword>
<accession>Q45423</accession>
<name>TFDA_BURSR</name>
<protein>
    <recommendedName>
        <fullName>Alpha-ketoglutarate-dependent 2,4-dichlorophenoxyacetate dioxygenase</fullName>
        <shortName>2,4-D dioxygenase</shortName>
        <ecNumber>1.14.11.-</ecNumber>
    </recommendedName>
</protein>
<proteinExistence type="inferred from homology"/>
<sequence length="297" mass="33638">MSINSEYLHPLFVGQVDNLALQGALSPAEVRDVENEMDQKAVLVFRGQPLDQDQQIAFARNFGQLEGGFIKVNQRPSRFKYAELADISNVSVDGKVAEADAREVVGNFANQLWHSDSSFQQPAARYSMLSAIVLPPSGGDTEFCDMRAAYDDLPEDFKKELQGLRAEHYALHSRFILGDTEYSESQRNAMPPVSWPLIRTHAGSGRKFLFIGAHASHIEGRPVAEGRMLLAELLEHATQPKFVYRHSWKVGDLVMWDNRCVLHRGRRYDVTARRELRRATTLGRRCRLSPRGQSWVQ</sequence>
<feature type="chain" id="PRO_0000194018" description="Alpha-ketoglutarate-dependent 2,4-dichlorophenoxyacetate dioxygenase">
    <location>
        <begin position="1"/>
        <end position="297"/>
    </location>
</feature>
<feature type="binding site" evidence="1">
    <location>
        <position position="114"/>
    </location>
    <ligand>
        <name>Fe cation</name>
        <dbReference type="ChEBI" id="CHEBI:24875"/>
        <note>catalytic</note>
    </ligand>
</feature>
<feature type="binding site" evidence="1">
    <location>
        <position position="116"/>
    </location>
    <ligand>
        <name>Fe cation</name>
        <dbReference type="ChEBI" id="CHEBI:24875"/>
        <note>catalytic</note>
    </ligand>
</feature>
<feature type="binding site" evidence="1">
    <location>
        <position position="141"/>
    </location>
    <ligand>
        <name>2-oxoglutarate</name>
        <dbReference type="ChEBI" id="CHEBI:16810"/>
    </ligand>
</feature>
<feature type="binding site" evidence="1">
    <location>
        <position position="248"/>
    </location>
    <ligand>
        <name>2-oxoglutarate</name>
        <dbReference type="ChEBI" id="CHEBI:16810"/>
    </ligand>
</feature>
<feature type="binding site" evidence="1">
    <location>
        <position position="263"/>
    </location>
    <ligand>
        <name>Fe cation</name>
        <dbReference type="ChEBI" id="CHEBI:24875"/>
        <note>catalytic</note>
    </ligand>
</feature>
<feature type="binding site" evidence="1">
    <location>
        <position position="274"/>
    </location>
    <ligand>
        <name>2-oxoglutarate</name>
        <dbReference type="ChEBI" id="CHEBI:16810"/>
    </ligand>
</feature>
<feature type="binding site" evidence="1">
    <location>
        <position position="278"/>
    </location>
    <ligand>
        <name>2-oxoglutarate</name>
        <dbReference type="ChEBI" id="CHEBI:16810"/>
    </ligand>
</feature>
<gene>
    <name type="primary">tfdA</name>
</gene>
<organism>
    <name type="scientific">Burkholderia sp. (strain RASC)</name>
    <dbReference type="NCBI Taxonomy" id="69003"/>
    <lineage>
        <taxon>Bacteria</taxon>
        <taxon>Pseudomonadati</taxon>
        <taxon>Pseudomonadota</taxon>
        <taxon>Betaproteobacteria</taxon>
        <taxon>Burkholderiales</taxon>
        <taxon>Burkholderiaceae</taxon>
        <taxon>Burkholderia</taxon>
    </lineage>
</organism>
<reference key="1">
    <citation type="journal article" date="1996" name="Appl. Environ. Microbiol.">
        <title>Characterization of a chromosomally encoded 2,4-dichlorophenoxyacetic acid/alpha-ketoglutarate dioxygenase from Burkholderia sp. strain RASC.</title>
        <authorList>
            <person name="Suwa Y."/>
            <person name="Wright A.D."/>
            <person name="Fukimori F."/>
            <person name="Nummy K.A."/>
            <person name="Hausinger R.P."/>
            <person name="Holben W.E."/>
            <person name="Forney L.J."/>
        </authorList>
    </citation>
    <scope>NUCLEOTIDE SEQUENCE [GENOMIC DNA]</scope>
</reference>
<dbReference type="EC" id="1.14.11.-"/>
<dbReference type="EMBL" id="U25717">
    <property type="protein sequence ID" value="AAB17363.1"/>
    <property type="molecule type" value="Genomic_DNA"/>
</dbReference>
<dbReference type="SMR" id="Q45423"/>
<dbReference type="KEGG" id="ag:AAB17363"/>
<dbReference type="UniPathway" id="UPA00685"/>
<dbReference type="GO" id="GO:0018602">
    <property type="term" value="F:2,4-dichlorophenoxyacetate alpha-ketoglutarate dioxygenase activity"/>
    <property type="evidence" value="ECO:0007669"/>
    <property type="project" value="RHEA"/>
</dbReference>
<dbReference type="GO" id="GO:0031418">
    <property type="term" value="F:L-ascorbic acid binding"/>
    <property type="evidence" value="ECO:0007669"/>
    <property type="project" value="UniProtKB-KW"/>
</dbReference>
<dbReference type="GO" id="GO:0046872">
    <property type="term" value="F:metal ion binding"/>
    <property type="evidence" value="ECO:0007669"/>
    <property type="project" value="UniProtKB-KW"/>
</dbReference>
<dbReference type="GO" id="GO:0046300">
    <property type="term" value="P:2,4-dichlorophenoxyacetic acid catabolic process"/>
    <property type="evidence" value="ECO:0007669"/>
    <property type="project" value="UniProtKB-UniPathway"/>
</dbReference>
<dbReference type="Gene3D" id="3.60.130.10">
    <property type="entry name" value="Clavaminate synthase-like"/>
    <property type="match status" value="1"/>
</dbReference>
<dbReference type="InterPro" id="IPR042098">
    <property type="entry name" value="TauD-like_sf"/>
</dbReference>
<dbReference type="InterPro" id="IPR003819">
    <property type="entry name" value="TauD/TfdA-like"/>
</dbReference>
<dbReference type="InterPro" id="IPR051178">
    <property type="entry name" value="TfdA_dioxygenase"/>
</dbReference>
<dbReference type="PANTHER" id="PTHR43779:SF3">
    <property type="entry name" value="(3R)-3-[(CARBOXYMETHYL)AMINO]FATTY ACID OXYGENASE_DECARBOXYLASE"/>
    <property type="match status" value="1"/>
</dbReference>
<dbReference type="PANTHER" id="PTHR43779">
    <property type="entry name" value="DIOXYGENASE RV0097-RELATED"/>
    <property type="match status" value="1"/>
</dbReference>
<dbReference type="Pfam" id="PF02668">
    <property type="entry name" value="TauD"/>
    <property type="match status" value="1"/>
</dbReference>
<dbReference type="SUPFAM" id="SSF51197">
    <property type="entry name" value="Clavaminate synthase-like"/>
    <property type="match status" value="1"/>
</dbReference>